<dbReference type="EC" id="6.1.1.16" evidence="1"/>
<dbReference type="EMBL" id="CP000431">
    <property type="protein sequence ID" value="ABG96248.1"/>
    <property type="molecule type" value="Genomic_DNA"/>
</dbReference>
<dbReference type="RefSeq" id="WP_011596856.1">
    <property type="nucleotide sequence ID" value="NC_008268.1"/>
</dbReference>
<dbReference type="SMR" id="Q0S888"/>
<dbReference type="KEGG" id="rha:RHA1_ro04462"/>
<dbReference type="PATRIC" id="fig|101510.16.peg.4493"/>
<dbReference type="eggNOG" id="COG0215">
    <property type="taxonomic scope" value="Bacteria"/>
</dbReference>
<dbReference type="HOGENOM" id="CLU_013528_0_1_11"/>
<dbReference type="OrthoDB" id="9815130at2"/>
<dbReference type="Proteomes" id="UP000008710">
    <property type="component" value="Chromosome"/>
</dbReference>
<dbReference type="GO" id="GO:0005829">
    <property type="term" value="C:cytosol"/>
    <property type="evidence" value="ECO:0007669"/>
    <property type="project" value="TreeGrafter"/>
</dbReference>
<dbReference type="GO" id="GO:0005524">
    <property type="term" value="F:ATP binding"/>
    <property type="evidence" value="ECO:0007669"/>
    <property type="project" value="UniProtKB-UniRule"/>
</dbReference>
<dbReference type="GO" id="GO:0004817">
    <property type="term" value="F:cysteine-tRNA ligase activity"/>
    <property type="evidence" value="ECO:0007669"/>
    <property type="project" value="UniProtKB-UniRule"/>
</dbReference>
<dbReference type="GO" id="GO:0008270">
    <property type="term" value="F:zinc ion binding"/>
    <property type="evidence" value="ECO:0007669"/>
    <property type="project" value="UniProtKB-UniRule"/>
</dbReference>
<dbReference type="GO" id="GO:0006423">
    <property type="term" value="P:cysteinyl-tRNA aminoacylation"/>
    <property type="evidence" value="ECO:0007669"/>
    <property type="project" value="UniProtKB-UniRule"/>
</dbReference>
<dbReference type="CDD" id="cd00672">
    <property type="entry name" value="CysRS_core"/>
    <property type="match status" value="1"/>
</dbReference>
<dbReference type="FunFam" id="3.40.50.620:FF:000068">
    <property type="entry name" value="Cysteine--tRNA ligase"/>
    <property type="match status" value="1"/>
</dbReference>
<dbReference type="Gene3D" id="1.20.120.1910">
    <property type="entry name" value="Cysteine-tRNA ligase, C-terminal anti-codon recognition domain"/>
    <property type="match status" value="1"/>
</dbReference>
<dbReference type="Gene3D" id="3.40.50.620">
    <property type="entry name" value="HUPs"/>
    <property type="match status" value="1"/>
</dbReference>
<dbReference type="HAMAP" id="MF_00041">
    <property type="entry name" value="Cys_tRNA_synth"/>
    <property type="match status" value="1"/>
</dbReference>
<dbReference type="InterPro" id="IPR015803">
    <property type="entry name" value="Cys-tRNA-ligase"/>
</dbReference>
<dbReference type="InterPro" id="IPR015273">
    <property type="entry name" value="Cys-tRNA-synt_Ia_DALR"/>
</dbReference>
<dbReference type="InterPro" id="IPR024909">
    <property type="entry name" value="Cys-tRNA/MSH_ligase"/>
</dbReference>
<dbReference type="InterPro" id="IPR014729">
    <property type="entry name" value="Rossmann-like_a/b/a_fold"/>
</dbReference>
<dbReference type="InterPro" id="IPR032678">
    <property type="entry name" value="tRNA-synt_1_cat_dom"/>
</dbReference>
<dbReference type="InterPro" id="IPR009080">
    <property type="entry name" value="tRNAsynth_Ia_anticodon-bd"/>
</dbReference>
<dbReference type="NCBIfam" id="TIGR00435">
    <property type="entry name" value="cysS"/>
    <property type="match status" value="1"/>
</dbReference>
<dbReference type="PANTHER" id="PTHR10890:SF30">
    <property type="entry name" value="CYSTEINE--TRNA LIGASE"/>
    <property type="match status" value="1"/>
</dbReference>
<dbReference type="PANTHER" id="PTHR10890">
    <property type="entry name" value="CYSTEINYL-TRNA SYNTHETASE"/>
    <property type="match status" value="1"/>
</dbReference>
<dbReference type="Pfam" id="PF09190">
    <property type="entry name" value="DALR_2"/>
    <property type="match status" value="1"/>
</dbReference>
<dbReference type="Pfam" id="PF01406">
    <property type="entry name" value="tRNA-synt_1e"/>
    <property type="match status" value="1"/>
</dbReference>
<dbReference type="PRINTS" id="PR00983">
    <property type="entry name" value="TRNASYNTHCYS"/>
</dbReference>
<dbReference type="SMART" id="SM00840">
    <property type="entry name" value="DALR_2"/>
    <property type="match status" value="1"/>
</dbReference>
<dbReference type="SUPFAM" id="SSF47323">
    <property type="entry name" value="Anticodon-binding domain of a subclass of class I aminoacyl-tRNA synthetases"/>
    <property type="match status" value="1"/>
</dbReference>
<dbReference type="SUPFAM" id="SSF52374">
    <property type="entry name" value="Nucleotidylyl transferase"/>
    <property type="match status" value="1"/>
</dbReference>
<name>SYC_RHOJR</name>
<proteinExistence type="inferred from homology"/>
<sequence>MTLRLFDTETRALRDFVPLAPGHASVYLCGATVQGDPHIGHVRSGVAFDVLRRWLLAHDYDVAFVRNVTDIEDKILNKAAEAGRPWWEWAATFERSFTWAYQQLGVLPPSVEPRATGHITQMVEMMQRLIDNGHAYAAGGDVYFDVRSYPRYGSLSGHKLDDVHQGESAGECKRDPRDFTLWKAEKPGEPSWPTPWGRGRPGWHLECSAMAEFYLGAAFDIHCGGLDLVFPHHENEIAQAKCAGDDFAQYWLHNGWVTMGGEKMSKSLGNVLSVPNVLKKVRPQELRYYLGSAHYRSMLEYSDTALDEGAAAFRRIESFVLRTQERAGEVPVGLWTEAFARALDDDLAVPAALAEVHGKVREGNIALDGGDLEGARGIASQVRAMLGILGVDPLDEHWTQETADASAATDALDVLVRAELERRQSARAEKNWAVADEVRDRLIRAGIEVTDTPNGPEWSLKAGQ</sequence>
<keyword id="KW-0030">Aminoacyl-tRNA synthetase</keyword>
<keyword id="KW-0067">ATP-binding</keyword>
<keyword id="KW-0963">Cytoplasm</keyword>
<keyword id="KW-0436">Ligase</keyword>
<keyword id="KW-0479">Metal-binding</keyword>
<keyword id="KW-0547">Nucleotide-binding</keyword>
<keyword id="KW-0648">Protein biosynthesis</keyword>
<keyword id="KW-0862">Zinc</keyword>
<evidence type="ECO:0000255" key="1">
    <source>
        <dbReference type="HAMAP-Rule" id="MF_00041"/>
    </source>
</evidence>
<feature type="chain" id="PRO_1000006605" description="Cysteine--tRNA ligase">
    <location>
        <begin position="1"/>
        <end position="464"/>
    </location>
</feature>
<feature type="short sequence motif" description="'HIGH' region">
    <location>
        <begin position="31"/>
        <end position="41"/>
    </location>
</feature>
<feature type="short sequence motif" description="'KMSKS' region">
    <location>
        <begin position="263"/>
        <end position="267"/>
    </location>
</feature>
<feature type="binding site" evidence="1">
    <location>
        <position position="29"/>
    </location>
    <ligand>
        <name>Zn(2+)</name>
        <dbReference type="ChEBI" id="CHEBI:29105"/>
    </ligand>
</feature>
<feature type="binding site" evidence="1">
    <location>
        <position position="207"/>
    </location>
    <ligand>
        <name>Zn(2+)</name>
        <dbReference type="ChEBI" id="CHEBI:29105"/>
    </ligand>
</feature>
<feature type="binding site" evidence="1">
    <location>
        <position position="232"/>
    </location>
    <ligand>
        <name>Zn(2+)</name>
        <dbReference type="ChEBI" id="CHEBI:29105"/>
    </ligand>
</feature>
<feature type="binding site" evidence="1">
    <location>
        <position position="236"/>
    </location>
    <ligand>
        <name>Zn(2+)</name>
        <dbReference type="ChEBI" id="CHEBI:29105"/>
    </ligand>
</feature>
<feature type="binding site" evidence="1">
    <location>
        <position position="266"/>
    </location>
    <ligand>
        <name>ATP</name>
        <dbReference type="ChEBI" id="CHEBI:30616"/>
    </ligand>
</feature>
<reference key="1">
    <citation type="journal article" date="2006" name="Proc. Natl. Acad. Sci. U.S.A.">
        <title>The complete genome of Rhodococcus sp. RHA1 provides insights into a catabolic powerhouse.</title>
        <authorList>
            <person name="McLeod M.P."/>
            <person name="Warren R.L."/>
            <person name="Hsiao W.W.L."/>
            <person name="Araki N."/>
            <person name="Myhre M."/>
            <person name="Fernandes C."/>
            <person name="Miyazawa D."/>
            <person name="Wong W."/>
            <person name="Lillquist A.L."/>
            <person name="Wang D."/>
            <person name="Dosanjh M."/>
            <person name="Hara H."/>
            <person name="Petrescu A."/>
            <person name="Morin R.D."/>
            <person name="Yang G."/>
            <person name="Stott J.M."/>
            <person name="Schein J.E."/>
            <person name="Shin H."/>
            <person name="Smailus D."/>
            <person name="Siddiqui A.S."/>
            <person name="Marra M.A."/>
            <person name="Jones S.J.M."/>
            <person name="Holt R."/>
            <person name="Brinkman F.S.L."/>
            <person name="Miyauchi K."/>
            <person name="Fukuda M."/>
            <person name="Davies J.E."/>
            <person name="Mohn W.W."/>
            <person name="Eltis L.D."/>
        </authorList>
    </citation>
    <scope>NUCLEOTIDE SEQUENCE [LARGE SCALE GENOMIC DNA]</scope>
    <source>
        <strain>RHA1</strain>
    </source>
</reference>
<protein>
    <recommendedName>
        <fullName evidence="1">Cysteine--tRNA ligase</fullName>
        <ecNumber evidence="1">6.1.1.16</ecNumber>
    </recommendedName>
    <alternativeName>
        <fullName evidence="1">Cysteinyl-tRNA synthetase</fullName>
        <shortName evidence="1">CysRS</shortName>
    </alternativeName>
</protein>
<organism>
    <name type="scientific">Rhodococcus jostii (strain RHA1)</name>
    <dbReference type="NCBI Taxonomy" id="101510"/>
    <lineage>
        <taxon>Bacteria</taxon>
        <taxon>Bacillati</taxon>
        <taxon>Actinomycetota</taxon>
        <taxon>Actinomycetes</taxon>
        <taxon>Mycobacteriales</taxon>
        <taxon>Nocardiaceae</taxon>
        <taxon>Rhodococcus</taxon>
    </lineage>
</organism>
<accession>Q0S888</accession>
<gene>
    <name evidence="1" type="primary">cysS</name>
    <name type="ordered locus">RHA1_ro04462</name>
</gene>
<comment type="catalytic activity">
    <reaction evidence="1">
        <text>tRNA(Cys) + L-cysteine + ATP = L-cysteinyl-tRNA(Cys) + AMP + diphosphate</text>
        <dbReference type="Rhea" id="RHEA:17773"/>
        <dbReference type="Rhea" id="RHEA-COMP:9661"/>
        <dbReference type="Rhea" id="RHEA-COMP:9679"/>
        <dbReference type="ChEBI" id="CHEBI:30616"/>
        <dbReference type="ChEBI" id="CHEBI:33019"/>
        <dbReference type="ChEBI" id="CHEBI:35235"/>
        <dbReference type="ChEBI" id="CHEBI:78442"/>
        <dbReference type="ChEBI" id="CHEBI:78517"/>
        <dbReference type="ChEBI" id="CHEBI:456215"/>
        <dbReference type="EC" id="6.1.1.16"/>
    </reaction>
</comment>
<comment type="cofactor">
    <cofactor evidence="1">
        <name>Zn(2+)</name>
        <dbReference type="ChEBI" id="CHEBI:29105"/>
    </cofactor>
    <text evidence="1">Binds 1 zinc ion per subunit.</text>
</comment>
<comment type="subunit">
    <text evidence="1">Monomer.</text>
</comment>
<comment type="subcellular location">
    <subcellularLocation>
        <location evidence="1">Cytoplasm</location>
    </subcellularLocation>
</comment>
<comment type="similarity">
    <text evidence="1">Belongs to the class-I aminoacyl-tRNA synthetase family.</text>
</comment>